<evidence type="ECO:0000250" key="1"/>
<evidence type="ECO:0000255" key="2"/>
<evidence type="ECO:0000269" key="3">
    <source>
    </source>
</evidence>
<evidence type="ECO:0000305" key="4"/>
<comment type="function">
    <text evidence="1">Involved in Fe(2+) uptake. Could be an iron-binding and/or electron-transfer component (By similarity).</text>
</comment>
<comment type="subunit">
    <text evidence="1">Monomer. Part of a ferrous iron transporter composed of EfeU, EfeO and EfeB (By similarity).</text>
</comment>
<comment type="subcellular location">
    <subcellularLocation>
        <location evidence="1">Periplasm</location>
    </subcellularLocation>
</comment>
<comment type="induction">
    <text evidence="3">Expressed in response to iron deprivation at pH 7.</text>
</comment>
<comment type="similarity">
    <text evidence="4">Belongs to the EfeM/EfeO family.</text>
</comment>
<sequence>MTINFRRNALQLSVAALFSSAFMANAADIPQVKVTVTDKQCEPMIITVNAGKTQFIIQNHSQKALEWEILKGVMVVEERENIAPGFSQKMTANLQPGEYDMTCGLLTNPKGKLIVKGEATADAAQSDALLSLGGAITAYKAYVMAETTQLVTDTKAFTDAIKAGDIEKAKALYAPTRQHYERIEPIAELFSDLDGSIDAREDDYEQKAADPKFTGFHRLEKALFGDNTTKGMDKYADQLYTDVVDLQKRISELAFPPSKVVGGAAGLIEEVAASKISGEEDRYSHTDLWDFQANVEGSQKIVDLLRPQLQKANPELLAKVDANFKKVDTILAKYRTKDGFENYDKLTDADRNALKGPITALAEDLAQLRGVLGLD</sequence>
<dbReference type="EMBL" id="AE014075">
    <property type="protein sequence ID" value="AAN79624.1"/>
    <property type="molecule type" value="Genomic_DNA"/>
</dbReference>
<dbReference type="RefSeq" id="WP_000154372.1">
    <property type="nucleotide sequence ID" value="NZ_CP051263.1"/>
</dbReference>
<dbReference type="SMR" id="Q8FJ35"/>
<dbReference type="STRING" id="199310.c1156"/>
<dbReference type="KEGG" id="ecc:c1156"/>
<dbReference type="eggNOG" id="COG2822">
    <property type="taxonomic scope" value="Bacteria"/>
</dbReference>
<dbReference type="HOGENOM" id="CLU_050342_2_1_6"/>
<dbReference type="BioCyc" id="ECOL199310:C1156-MONOMER"/>
<dbReference type="Proteomes" id="UP000001410">
    <property type="component" value="Chromosome"/>
</dbReference>
<dbReference type="GO" id="GO:0042597">
    <property type="term" value="C:periplasmic space"/>
    <property type="evidence" value="ECO:0007669"/>
    <property type="project" value="UniProtKB-SubCell"/>
</dbReference>
<dbReference type="CDD" id="cd04203">
    <property type="entry name" value="Cupredoxin_like_3"/>
    <property type="match status" value="1"/>
</dbReference>
<dbReference type="CDD" id="cd14656">
    <property type="entry name" value="Imelysin-like_EfeO"/>
    <property type="match status" value="1"/>
</dbReference>
<dbReference type="FunFam" id="1.20.1420.20:FF:000001">
    <property type="entry name" value="Iron uptake system component EfeO"/>
    <property type="match status" value="1"/>
</dbReference>
<dbReference type="FunFam" id="2.60.40.420:FF:000052">
    <property type="entry name" value="Iron uptake system component EfeO"/>
    <property type="match status" value="1"/>
</dbReference>
<dbReference type="Gene3D" id="2.60.40.420">
    <property type="entry name" value="Cupredoxins - blue copper proteins"/>
    <property type="match status" value="1"/>
</dbReference>
<dbReference type="Gene3D" id="1.20.1420.20">
    <property type="entry name" value="M75 peptidase, HXXE motif"/>
    <property type="match status" value="1"/>
</dbReference>
<dbReference type="InterPro" id="IPR008972">
    <property type="entry name" value="Cupredoxin"/>
</dbReference>
<dbReference type="InterPro" id="IPR050894">
    <property type="entry name" value="EfeM/EfeO_iron_uptake"/>
</dbReference>
<dbReference type="InterPro" id="IPR028096">
    <property type="entry name" value="EfeO_Cupredoxin"/>
</dbReference>
<dbReference type="InterPro" id="IPR018976">
    <property type="entry name" value="Imelysin-like"/>
</dbReference>
<dbReference type="InterPro" id="IPR034981">
    <property type="entry name" value="Imelysin-like_EfeO/Algp7"/>
</dbReference>
<dbReference type="InterPro" id="IPR038352">
    <property type="entry name" value="Imelysin_sf"/>
</dbReference>
<dbReference type="InterPro" id="IPR053377">
    <property type="entry name" value="Iron_uptake_EfeM/EfeO"/>
</dbReference>
<dbReference type="NCBIfam" id="NF041757">
    <property type="entry name" value="EfeO"/>
    <property type="match status" value="1"/>
</dbReference>
<dbReference type="NCBIfam" id="NF007697">
    <property type="entry name" value="PRK10378.1"/>
    <property type="match status" value="1"/>
</dbReference>
<dbReference type="PANTHER" id="PTHR39192">
    <property type="entry name" value="IRON UPTAKE SYSTEM COMPONENT EFEO"/>
    <property type="match status" value="1"/>
</dbReference>
<dbReference type="PANTHER" id="PTHR39192:SF1">
    <property type="entry name" value="IRON UPTAKE SYSTEM COMPONENT EFEO"/>
    <property type="match status" value="1"/>
</dbReference>
<dbReference type="Pfam" id="PF13473">
    <property type="entry name" value="Cupredoxin_1"/>
    <property type="match status" value="1"/>
</dbReference>
<dbReference type="Pfam" id="PF09375">
    <property type="entry name" value="Peptidase_M75"/>
    <property type="match status" value="1"/>
</dbReference>
<dbReference type="SUPFAM" id="SSF49503">
    <property type="entry name" value="Cupredoxins"/>
    <property type="match status" value="1"/>
</dbReference>
<keyword id="KW-0574">Periplasm</keyword>
<keyword id="KW-1185">Reference proteome</keyword>
<keyword id="KW-0732">Signal</keyword>
<reference key="1">
    <citation type="journal article" date="2002" name="Proc. Natl. Acad. Sci. U.S.A.">
        <title>Extensive mosaic structure revealed by the complete genome sequence of uropathogenic Escherichia coli.</title>
        <authorList>
            <person name="Welch R.A."/>
            <person name="Burland V."/>
            <person name="Plunkett G. III"/>
            <person name="Redford P."/>
            <person name="Roesch P."/>
            <person name="Rasko D."/>
            <person name="Buckles E.L."/>
            <person name="Liou S.-R."/>
            <person name="Boutin A."/>
            <person name="Hackett J."/>
            <person name="Stroud D."/>
            <person name="Mayhew G.F."/>
            <person name="Rose D.J."/>
            <person name="Zhou S."/>
            <person name="Schwartz D.C."/>
            <person name="Perna N.T."/>
            <person name="Mobley H.L.T."/>
            <person name="Donnenberg M.S."/>
            <person name="Blattner F.R."/>
        </authorList>
    </citation>
    <scope>NUCLEOTIDE SEQUENCE [LARGE SCALE GENOMIC DNA]</scope>
    <source>
        <strain>CFT073 / ATCC 700928 / UPEC</strain>
    </source>
</reference>
<reference key="2">
    <citation type="journal article" date="2006" name="Mol. Microbiol.">
        <title>A new ferrous iron-uptake transporter, EfeU (YcdN), from Escherichia coli.</title>
        <authorList>
            <person name="Grosse C."/>
            <person name="Scherer J."/>
            <person name="Koch D."/>
            <person name="Otto M."/>
            <person name="Taudte N."/>
            <person name="Grass G."/>
        </authorList>
    </citation>
    <scope>INDUCTION</scope>
    <source>
        <strain>O6:K5:H1 / Nissle 1917</strain>
    </source>
</reference>
<organism>
    <name type="scientific">Escherichia coli O6:H1 (strain CFT073 / ATCC 700928 / UPEC)</name>
    <dbReference type="NCBI Taxonomy" id="199310"/>
    <lineage>
        <taxon>Bacteria</taxon>
        <taxon>Pseudomonadati</taxon>
        <taxon>Pseudomonadota</taxon>
        <taxon>Gammaproteobacteria</taxon>
        <taxon>Enterobacterales</taxon>
        <taxon>Enterobacteriaceae</taxon>
        <taxon>Escherichia</taxon>
    </lineage>
</organism>
<feature type="signal peptide" evidence="2">
    <location>
        <begin position="1"/>
        <end position="26"/>
    </location>
</feature>
<feature type="chain" id="PRO_0000278308" description="Iron uptake system component EfeO">
    <location>
        <begin position="27"/>
        <end position="375"/>
    </location>
</feature>
<gene>
    <name type="primary">efeO</name>
    <name type="ordered locus">c1156</name>
</gene>
<proteinExistence type="evidence at transcript level"/>
<protein>
    <recommendedName>
        <fullName>Iron uptake system component EfeO</fullName>
    </recommendedName>
</protein>
<name>EFEO_ECOL6</name>
<accession>Q8FJ35</accession>